<protein>
    <recommendedName>
        <fullName>Cytochrome b</fullName>
    </recommendedName>
    <alternativeName>
        <fullName>Complex III subunit 3</fullName>
    </alternativeName>
    <alternativeName>
        <fullName>Complex III subunit III</fullName>
    </alternativeName>
    <alternativeName>
        <fullName>Cytochrome b-c1 complex subunit 3</fullName>
    </alternativeName>
    <alternativeName>
        <fullName>Ubiquinol-cytochrome-c reductase complex cytochrome b subunit</fullName>
    </alternativeName>
</protein>
<keyword id="KW-0249">Electron transport</keyword>
<keyword id="KW-0349">Heme</keyword>
<keyword id="KW-0408">Iron</keyword>
<keyword id="KW-0472">Membrane</keyword>
<keyword id="KW-0479">Metal-binding</keyword>
<keyword id="KW-0496">Mitochondrion</keyword>
<keyword id="KW-0999">Mitochondrion inner membrane</keyword>
<keyword id="KW-0679">Respiratory chain</keyword>
<keyword id="KW-0812">Transmembrane</keyword>
<keyword id="KW-1133">Transmembrane helix</keyword>
<keyword id="KW-0813">Transport</keyword>
<keyword id="KW-0830">Ubiquinone</keyword>
<proteinExistence type="inferred from homology"/>
<evidence type="ECO:0000250" key="1"/>
<evidence type="ECO:0000250" key="2">
    <source>
        <dbReference type="UniProtKB" id="P00157"/>
    </source>
</evidence>
<evidence type="ECO:0000255" key="3">
    <source>
        <dbReference type="PROSITE-ProRule" id="PRU00967"/>
    </source>
</evidence>
<evidence type="ECO:0000255" key="4">
    <source>
        <dbReference type="PROSITE-ProRule" id="PRU00968"/>
    </source>
</evidence>
<organism>
    <name type="scientific">Arctocebus calabarensis</name>
    <name type="common">Calabar angwantibo</name>
    <dbReference type="NCBI Taxonomy" id="261739"/>
    <lineage>
        <taxon>Eukaryota</taxon>
        <taxon>Metazoa</taxon>
        <taxon>Chordata</taxon>
        <taxon>Craniata</taxon>
        <taxon>Vertebrata</taxon>
        <taxon>Euteleostomi</taxon>
        <taxon>Mammalia</taxon>
        <taxon>Eutheria</taxon>
        <taxon>Euarchontoglires</taxon>
        <taxon>Primates</taxon>
        <taxon>Strepsirrhini</taxon>
        <taxon>Lorisiformes</taxon>
        <taxon>Lorisidae</taxon>
        <taxon>Arctocebus</taxon>
    </lineage>
</organism>
<feature type="chain" id="PRO_0000060616" description="Cytochrome b">
    <location>
        <begin position="1"/>
        <end position="379"/>
    </location>
</feature>
<feature type="transmembrane region" description="Helical" evidence="2">
    <location>
        <begin position="33"/>
        <end position="53"/>
    </location>
</feature>
<feature type="transmembrane region" description="Helical" evidence="2">
    <location>
        <begin position="77"/>
        <end position="98"/>
    </location>
</feature>
<feature type="transmembrane region" description="Helical" evidence="2">
    <location>
        <begin position="113"/>
        <end position="133"/>
    </location>
</feature>
<feature type="transmembrane region" description="Helical" evidence="2">
    <location>
        <begin position="178"/>
        <end position="198"/>
    </location>
</feature>
<feature type="transmembrane region" description="Helical" evidence="2">
    <location>
        <begin position="226"/>
        <end position="246"/>
    </location>
</feature>
<feature type="transmembrane region" description="Helical" evidence="2">
    <location>
        <begin position="288"/>
        <end position="308"/>
    </location>
</feature>
<feature type="transmembrane region" description="Helical" evidence="2">
    <location>
        <begin position="320"/>
        <end position="340"/>
    </location>
</feature>
<feature type="transmembrane region" description="Helical" evidence="2">
    <location>
        <begin position="347"/>
        <end position="367"/>
    </location>
</feature>
<feature type="binding site" description="axial binding residue" evidence="2">
    <location>
        <position position="83"/>
    </location>
    <ligand>
        <name>heme b</name>
        <dbReference type="ChEBI" id="CHEBI:60344"/>
        <label>b562</label>
    </ligand>
    <ligandPart>
        <name>Fe</name>
        <dbReference type="ChEBI" id="CHEBI:18248"/>
    </ligandPart>
</feature>
<feature type="binding site" description="axial binding residue" evidence="2">
    <location>
        <position position="97"/>
    </location>
    <ligand>
        <name>heme b</name>
        <dbReference type="ChEBI" id="CHEBI:60344"/>
        <label>b566</label>
    </ligand>
    <ligandPart>
        <name>Fe</name>
        <dbReference type="ChEBI" id="CHEBI:18248"/>
    </ligandPart>
</feature>
<feature type="binding site" description="axial binding residue" evidence="2">
    <location>
        <position position="182"/>
    </location>
    <ligand>
        <name>heme b</name>
        <dbReference type="ChEBI" id="CHEBI:60344"/>
        <label>b562</label>
    </ligand>
    <ligandPart>
        <name>Fe</name>
        <dbReference type="ChEBI" id="CHEBI:18248"/>
    </ligandPart>
</feature>
<feature type="binding site" description="axial binding residue" evidence="2">
    <location>
        <position position="196"/>
    </location>
    <ligand>
        <name>heme b</name>
        <dbReference type="ChEBI" id="CHEBI:60344"/>
        <label>b566</label>
    </ligand>
    <ligandPart>
        <name>Fe</name>
        <dbReference type="ChEBI" id="CHEBI:18248"/>
    </ligandPart>
</feature>
<feature type="binding site" evidence="2">
    <location>
        <position position="201"/>
    </location>
    <ligand>
        <name>a ubiquinone</name>
        <dbReference type="ChEBI" id="CHEBI:16389"/>
    </ligand>
</feature>
<geneLocation type="mitochondrion"/>
<accession>Q5VJ39</accession>
<gene>
    <name type="primary">MT-CYB</name>
    <name type="synonym">COB</name>
    <name type="synonym">CYTB</name>
    <name type="synonym">MTCYB</name>
</gene>
<sequence>MTIMRKQHPLAKIINHSFIDLPTPSNISSWWNFGSLLGLCLTIQIATGLFLAMHYTPDTTTAFSSVTHICRDVNYGWLIRYMHANGASLFFMCLFTHIGRGLYYGSHNFVETWNIGIILLFTVMATAFMGYVLPWGQMSFWGATVITNLLSAIPYIGTSLVEWIWGGFSVDKATLTRFFAFHFILPFIITALVMVHLLFLHETGSNNPSGIPSEADKIPFHPYYTIKDLLGVILLLLMLSILVLFTPDLLGDPDNYTPANPLNTPPHIKPEWYFLFAYAILRSIPNKLGGVAALIMSILVLALMPLMHTAKQRSMMFRPLSQCLYWILVADLFILTWIGGQPVENPFITIGQTASLLYFLIILTLMPLTSILENKMLKW</sequence>
<dbReference type="EMBL" id="AY441474">
    <property type="protein sequence ID" value="AAS00155.1"/>
    <property type="molecule type" value="Genomic_DNA"/>
</dbReference>
<dbReference type="SMR" id="Q5VJ39"/>
<dbReference type="GO" id="GO:0005743">
    <property type="term" value="C:mitochondrial inner membrane"/>
    <property type="evidence" value="ECO:0007669"/>
    <property type="project" value="UniProtKB-SubCell"/>
</dbReference>
<dbReference type="GO" id="GO:0045275">
    <property type="term" value="C:respiratory chain complex III"/>
    <property type="evidence" value="ECO:0007669"/>
    <property type="project" value="InterPro"/>
</dbReference>
<dbReference type="GO" id="GO:0046872">
    <property type="term" value="F:metal ion binding"/>
    <property type="evidence" value="ECO:0007669"/>
    <property type="project" value="UniProtKB-KW"/>
</dbReference>
<dbReference type="GO" id="GO:0008121">
    <property type="term" value="F:ubiquinol-cytochrome-c reductase activity"/>
    <property type="evidence" value="ECO:0007669"/>
    <property type="project" value="InterPro"/>
</dbReference>
<dbReference type="GO" id="GO:0006122">
    <property type="term" value="P:mitochondrial electron transport, ubiquinol to cytochrome c"/>
    <property type="evidence" value="ECO:0007669"/>
    <property type="project" value="TreeGrafter"/>
</dbReference>
<dbReference type="CDD" id="cd00290">
    <property type="entry name" value="cytochrome_b_C"/>
    <property type="match status" value="1"/>
</dbReference>
<dbReference type="CDD" id="cd00284">
    <property type="entry name" value="Cytochrome_b_N"/>
    <property type="match status" value="1"/>
</dbReference>
<dbReference type="FunFam" id="1.20.810.10:FF:000002">
    <property type="entry name" value="Cytochrome b"/>
    <property type="match status" value="1"/>
</dbReference>
<dbReference type="Gene3D" id="1.20.810.10">
    <property type="entry name" value="Cytochrome Bc1 Complex, Chain C"/>
    <property type="match status" value="1"/>
</dbReference>
<dbReference type="InterPro" id="IPR005798">
    <property type="entry name" value="Cyt_b/b6_C"/>
</dbReference>
<dbReference type="InterPro" id="IPR036150">
    <property type="entry name" value="Cyt_b/b6_C_sf"/>
</dbReference>
<dbReference type="InterPro" id="IPR005797">
    <property type="entry name" value="Cyt_b/b6_N"/>
</dbReference>
<dbReference type="InterPro" id="IPR027387">
    <property type="entry name" value="Cytb/b6-like_sf"/>
</dbReference>
<dbReference type="InterPro" id="IPR030689">
    <property type="entry name" value="Cytochrome_b"/>
</dbReference>
<dbReference type="InterPro" id="IPR048260">
    <property type="entry name" value="Cytochrome_b_C_euk/bac"/>
</dbReference>
<dbReference type="InterPro" id="IPR048259">
    <property type="entry name" value="Cytochrome_b_N_euk/bac"/>
</dbReference>
<dbReference type="InterPro" id="IPR016174">
    <property type="entry name" value="Di-haem_cyt_TM"/>
</dbReference>
<dbReference type="PANTHER" id="PTHR19271">
    <property type="entry name" value="CYTOCHROME B"/>
    <property type="match status" value="1"/>
</dbReference>
<dbReference type="PANTHER" id="PTHR19271:SF16">
    <property type="entry name" value="CYTOCHROME B"/>
    <property type="match status" value="1"/>
</dbReference>
<dbReference type="Pfam" id="PF00032">
    <property type="entry name" value="Cytochrom_B_C"/>
    <property type="match status" value="1"/>
</dbReference>
<dbReference type="Pfam" id="PF00033">
    <property type="entry name" value="Cytochrome_B"/>
    <property type="match status" value="1"/>
</dbReference>
<dbReference type="PIRSF" id="PIRSF038885">
    <property type="entry name" value="COB"/>
    <property type="match status" value="1"/>
</dbReference>
<dbReference type="SUPFAM" id="SSF81648">
    <property type="entry name" value="a domain/subunit of cytochrome bc1 complex (Ubiquinol-cytochrome c reductase)"/>
    <property type="match status" value="1"/>
</dbReference>
<dbReference type="SUPFAM" id="SSF81342">
    <property type="entry name" value="Transmembrane di-heme cytochromes"/>
    <property type="match status" value="1"/>
</dbReference>
<dbReference type="PROSITE" id="PS51003">
    <property type="entry name" value="CYTB_CTER"/>
    <property type="match status" value="1"/>
</dbReference>
<dbReference type="PROSITE" id="PS51002">
    <property type="entry name" value="CYTB_NTER"/>
    <property type="match status" value="1"/>
</dbReference>
<name>CYB_ARCCA</name>
<comment type="function">
    <text evidence="2">Component of the ubiquinol-cytochrome c reductase complex (complex III or cytochrome b-c1 complex) that is part of the mitochondrial respiratory chain. The b-c1 complex mediates electron transfer from ubiquinol to cytochrome c. Contributes to the generation of a proton gradient across the mitochondrial membrane that is then used for ATP synthesis.</text>
</comment>
<comment type="cofactor">
    <cofactor evidence="2">
        <name>heme b</name>
        <dbReference type="ChEBI" id="CHEBI:60344"/>
    </cofactor>
    <text evidence="2">Binds 2 heme b groups non-covalently.</text>
</comment>
<comment type="subunit">
    <text evidence="2">The cytochrome bc1 complex contains 11 subunits: 3 respiratory subunits (MT-CYB, CYC1 and UQCRFS1), 2 core proteins (UQCRC1 and UQCRC2) and 6 low-molecular weight proteins (UQCRH/QCR6, UQCRB/QCR7, UQCRQ/QCR8, UQCR10/QCR9, UQCR11/QCR10 and a cleavage product of UQCRFS1). This cytochrome bc1 complex then forms a dimer.</text>
</comment>
<comment type="subcellular location">
    <subcellularLocation>
        <location evidence="2">Mitochondrion inner membrane</location>
        <topology evidence="2">Multi-pass membrane protein</topology>
    </subcellularLocation>
</comment>
<comment type="miscellaneous">
    <text evidence="1">Heme 1 (or BL or b562) is low-potential and absorbs at about 562 nm, and heme 2 (or BH or b566) is high-potential and absorbs at about 566 nm.</text>
</comment>
<comment type="similarity">
    <text evidence="3 4">Belongs to the cytochrome b family.</text>
</comment>
<comment type="caution">
    <text evidence="2">The full-length protein contains only eight transmembrane helices, not nine as predicted by bioinformatics tools.</text>
</comment>
<reference key="1">
    <citation type="submission" date="2003-10" db="EMBL/GenBank/DDBJ databases">
        <title>61 primate SINEs and the evolution of strepsirrhines.</title>
        <authorList>
            <person name="Roos C."/>
            <person name="Schmitz J."/>
            <person name="Zischler H."/>
        </authorList>
    </citation>
    <scope>NUCLEOTIDE SEQUENCE [GENOMIC DNA]</scope>
</reference>